<feature type="chain" id="PRO_0000269052" description="Small ribosomal subunit protein uS14A">
    <location>
        <begin position="1"/>
        <end position="89"/>
    </location>
</feature>
<evidence type="ECO:0000255" key="1">
    <source>
        <dbReference type="HAMAP-Rule" id="MF_00537"/>
    </source>
</evidence>
<evidence type="ECO:0000305" key="2"/>
<gene>
    <name evidence="1" type="primary">rpsN</name>
    <name type="ordered locus">LSL_1944</name>
</gene>
<proteinExistence type="inferred from homology"/>
<sequence length="89" mass="10666">MAKKSKIAKYRKQQMLVAKYAEIRKQLKVNHDYESLRKLPKDSNPIRLKNRDEIDGRPRAYMRKFKMSRINFRELAHQGKIPGVHKASW</sequence>
<dbReference type="EMBL" id="CP000234">
    <property type="protein sequence ID" value="ABE00748.1"/>
    <property type="molecule type" value="Genomic_DNA"/>
</dbReference>
<dbReference type="RefSeq" id="WP_011476677.1">
    <property type="nucleotide sequence ID" value="NC_007930.1"/>
</dbReference>
<dbReference type="RefSeq" id="YP_536831.1">
    <property type="nucleotide sequence ID" value="NC_007930.1"/>
</dbReference>
<dbReference type="SMR" id="Q1WQV0"/>
<dbReference type="KEGG" id="lsl:LSL_1944"/>
<dbReference type="PATRIC" id="fig|362948.14.peg.2066"/>
<dbReference type="HOGENOM" id="CLU_139869_0_0_9"/>
<dbReference type="OrthoDB" id="9810484at2"/>
<dbReference type="Proteomes" id="UP000006559">
    <property type="component" value="Plasmid pMP118"/>
</dbReference>
<dbReference type="GO" id="GO:0005737">
    <property type="term" value="C:cytoplasm"/>
    <property type="evidence" value="ECO:0007669"/>
    <property type="project" value="UniProtKB-ARBA"/>
</dbReference>
<dbReference type="GO" id="GO:0015935">
    <property type="term" value="C:small ribosomal subunit"/>
    <property type="evidence" value="ECO:0007669"/>
    <property type="project" value="TreeGrafter"/>
</dbReference>
<dbReference type="GO" id="GO:0019843">
    <property type="term" value="F:rRNA binding"/>
    <property type="evidence" value="ECO:0007669"/>
    <property type="project" value="UniProtKB-UniRule"/>
</dbReference>
<dbReference type="GO" id="GO:0003735">
    <property type="term" value="F:structural constituent of ribosome"/>
    <property type="evidence" value="ECO:0007669"/>
    <property type="project" value="InterPro"/>
</dbReference>
<dbReference type="GO" id="GO:0006412">
    <property type="term" value="P:translation"/>
    <property type="evidence" value="ECO:0007669"/>
    <property type="project" value="UniProtKB-UniRule"/>
</dbReference>
<dbReference type="Gene3D" id="4.10.830.10">
    <property type="entry name" value="30s Ribosomal Protein S14, Chain N"/>
    <property type="match status" value="1"/>
</dbReference>
<dbReference type="HAMAP" id="MF_00537">
    <property type="entry name" value="Ribosomal_uS14_1"/>
    <property type="match status" value="1"/>
</dbReference>
<dbReference type="InterPro" id="IPR001209">
    <property type="entry name" value="Ribosomal_uS14"/>
</dbReference>
<dbReference type="InterPro" id="IPR023036">
    <property type="entry name" value="Ribosomal_uS14_bac/plastid"/>
</dbReference>
<dbReference type="InterPro" id="IPR043140">
    <property type="entry name" value="Ribosomal_uS14_sf"/>
</dbReference>
<dbReference type="NCBIfam" id="NF006477">
    <property type="entry name" value="PRK08881.1"/>
    <property type="match status" value="1"/>
</dbReference>
<dbReference type="PANTHER" id="PTHR19836">
    <property type="entry name" value="30S RIBOSOMAL PROTEIN S14"/>
    <property type="match status" value="1"/>
</dbReference>
<dbReference type="PANTHER" id="PTHR19836:SF19">
    <property type="entry name" value="SMALL RIBOSOMAL SUBUNIT PROTEIN US14M"/>
    <property type="match status" value="1"/>
</dbReference>
<dbReference type="Pfam" id="PF00253">
    <property type="entry name" value="Ribosomal_S14"/>
    <property type="match status" value="1"/>
</dbReference>
<dbReference type="SUPFAM" id="SSF57716">
    <property type="entry name" value="Glucocorticoid receptor-like (DNA-binding domain)"/>
    <property type="match status" value="1"/>
</dbReference>
<organism>
    <name type="scientific">Ligilactobacillus salivarius (strain UCC118)</name>
    <name type="common">Lactobacillus salivarius</name>
    <dbReference type="NCBI Taxonomy" id="362948"/>
    <lineage>
        <taxon>Bacteria</taxon>
        <taxon>Bacillati</taxon>
        <taxon>Bacillota</taxon>
        <taxon>Bacilli</taxon>
        <taxon>Lactobacillales</taxon>
        <taxon>Lactobacillaceae</taxon>
        <taxon>Ligilactobacillus</taxon>
    </lineage>
</organism>
<keyword id="KW-0614">Plasmid</keyword>
<keyword id="KW-1185">Reference proteome</keyword>
<keyword id="KW-0687">Ribonucleoprotein</keyword>
<keyword id="KW-0689">Ribosomal protein</keyword>
<keyword id="KW-0694">RNA-binding</keyword>
<keyword id="KW-0699">rRNA-binding</keyword>
<reference key="1">
    <citation type="journal article" date="2006" name="Proc. Natl. Acad. Sci. U.S.A.">
        <title>Multireplicon genome architecture of Lactobacillus salivarius.</title>
        <authorList>
            <person name="Claesson M.J."/>
            <person name="Li Y."/>
            <person name="Leahy S."/>
            <person name="Canchaya C."/>
            <person name="van Pijkeren J.P."/>
            <person name="Cerdeno-Tarraga A.M."/>
            <person name="Parkhill J."/>
            <person name="Flynn S."/>
            <person name="O'Sullivan G.C."/>
            <person name="Collins J.K."/>
            <person name="Higgins D."/>
            <person name="Shanahan F."/>
            <person name="Fitzgerald G.F."/>
            <person name="van Sinderen D."/>
            <person name="O'Toole P.W."/>
        </authorList>
    </citation>
    <scope>NUCLEOTIDE SEQUENCE [LARGE SCALE GENOMIC DNA]</scope>
    <source>
        <strain>UCC118</strain>
    </source>
</reference>
<accession>Q1WQV0</accession>
<geneLocation type="plasmid">
    <name>pMP118</name>
</geneLocation>
<protein>
    <recommendedName>
        <fullName evidence="1">Small ribosomal subunit protein uS14A</fullName>
    </recommendedName>
    <alternativeName>
        <fullName evidence="2">30S ribosomal protein S14</fullName>
    </alternativeName>
</protein>
<name>RS14_LIGS1</name>
<comment type="function">
    <text evidence="1">Binds 16S rRNA, required for the assembly of 30S particles and may also be responsible for determining the conformation of the 16S rRNA at the A site.</text>
</comment>
<comment type="subunit">
    <text evidence="1">Part of the 30S ribosomal subunit. Contacts proteins S3 and S10.</text>
</comment>
<comment type="similarity">
    <text evidence="1">Belongs to the universal ribosomal protein uS14 family.</text>
</comment>